<name>HDG5_ARATH</name>
<sequence>MLTMGEGNVMTSNNRFASPPQQPSSSSPGTIQNPNFNFIPFNSYSSIIPKEEHGMMSMMMMMGDGTVEEMMENGSAGGSFGSGSEQAEDPKFGNESDVNELHDDEQPPPAKKKRYHRHTNRQIQEMEALFKENPHPDDKQRKRLSAELGLKPRQVKFWFQNRRTQMKAQQDRNENVMLRAENDNLKSENCHLQAELRCLSCPSCGGPTVLGDIPFNEIHIENCRLREELDRLCCIASRYTGRPMQSMPPSQPLINPSPMLPHHQPSLELDMSVYAGNFPEQSCTDMMMLPPQDTACFFPDQTANNNNNNNMLLADEEKVIAMEFAVSCVQELTKMCDTEEPLWIKKKSDKIGGEILCLNEEEYMRLFPWPMENQNNKGDFLREASKANAVVIMNSITLVDAFLNADKWSEMFCSIVARAKTVQIISSGVSGASGSLLLMFAELQVLSPLVPTREAYFLRYVEQNAETGNWAIVDFPIDSFHDQMQPMNTITHEYKRKPSGCIIQDMPNGYSQVKWVEHVEVDEKHVHETFAEYVKSGMAFGANRWLDVLQRQCERIASLMARNITDLGVISSAEARRNIMRLSQRLVKTFCVNISTAYGQSWTALSETTKDTVRITTRKMCEPGQPTGVVLCAVSTTWLPFSHHQVFDLIRDQHHQSLLEVLFNGNSPHEVAHIANGSHPGNCISLLRINVASNSWHNVELMLQESCIDNSGSLIVYSTVDVDSIQQAMNGEDSSNIPILPLGFSIVPVNPPEGISVNSHSPPSCLLTVGIQVLASNVPTAKPNLSTVTTINNHLCATVNQITSALSNTITPVIASSADVSNQEVS</sequence>
<feature type="chain" id="PRO_0000331667" description="Homeobox-leucine zipper protein HDG5">
    <location>
        <begin position="1"/>
        <end position="826"/>
    </location>
</feature>
<feature type="domain" description="START" evidence="4">
    <location>
        <begin position="314"/>
        <end position="558"/>
    </location>
</feature>
<feature type="DNA-binding region" description="Homeobox" evidence="3">
    <location>
        <begin position="111"/>
        <end position="170"/>
    </location>
</feature>
<feature type="region of interest" description="Disordered" evidence="5">
    <location>
        <begin position="1"/>
        <end position="34"/>
    </location>
</feature>
<feature type="region of interest" description="Disordered" evidence="5">
    <location>
        <begin position="69"/>
        <end position="119"/>
    </location>
</feature>
<feature type="coiled-coil region" evidence="2">
    <location>
        <begin position="165"/>
        <end position="189"/>
    </location>
</feature>
<feature type="compositionally biased region" description="Low complexity" evidence="5">
    <location>
        <begin position="23"/>
        <end position="34"/>
    </location>
</feature>
<feature type="compositionally biased region" description="Basic and acidic residues" evidence="5">
    <location>
        <begin position="88"/>
        <end position="105"/>
    </location>
</feature>
<feature type="compositionally biased region" description="Basic residues" evidence="5">
    <location>
        <begin position="110"/>
        <end position="119"/>
    </location>
</feature>
<proteinExistence type="evidence at transcript level"/>
<dbReference type="EMBL" id="AB013394">
    <property type="protein sequence ID" value="BAB10227.1"/>
    <property type="status" value="ALT_SEQ"/>
    <property type="molecule type" value="Genomic_DNA"/>
</dbReference>
<dbReference type="EMBL" id="CP002688">
    <property type="protein sequence ID" value="AED95443.1"/>
    <property type="molecule type" value="Genomic_DNA"/>
</dbReference>
<dbReference type="EMBL" id="CP002688">
    <property type="protein sequence ID" value="ANM68239.1"/>
    <property type="molecule type" value="Genomic_DNA"/>
</dbReference>
<dbReference type="EMBL" id="CP002688">
    <property type="protein sequence ID" value="ANM68240.1"/>
    <property type="molecule type" value="Genomic_DNA"/>
</dbReference>
<dbReference type="EMBL" id="BX841652">
    <property type="status" value="NOT_ANNOTATED_CDS"/>
    <property type="molecule type" value="mRNA"/>
</dbReference>
<dbReference type="RefSeq" id="NP_001318750.1">
    <property type="nucleotide sequence ID" value="NM_001344703.1"/>
</dbReference>
<dbReference type="RefSeq" id="NP_001330010.1">
    <property type="nucleotide sequence ID" value="NM_001344704.1"/>
</dbReference>
<dbReference type="RefSeq" id="NP_199499.3">
    <property type="nucleotide sequence ID" value="NM_124059.4"/>
</dbReference>
<dbReference type="SMR" id="Q9FJS2"/>
<dbReference type="FunCoup" id="Q9FJS2">
    <property type="interactions" value="340"/>
</dbReference>
<dbReference type="IntAct" id="Q9FJS2">
    <property type="interactions" value="3"/>
</dbReference>
<dbReference type="STRING" id="3702.Q9FJS2"/>
<dbReference type="PaxDb" id="3702-AT5G46880.1"/>
<dbReference type="ProteomicsDB" id="247354"/>
<dbReference type="EnsemblPlants" id="AT5G46880.1">
    <property type="protein sequence ID" value="AT5G46880.1"/>
    <property type="gene ID" value="AT5G46880"/>
</dbReference>
<dbReference type="EnsemblPlants" id="AT5G46880.2">
    <property type="protein sequence ID" value="AT5G46880.2"/>
    <property type="gene ID" value="AT5G46880"/>
</dbReference>
<dbReference type="EnsemblPlants" id="AT5G46880.3">
    <property type="protein sequence ID" value="AT5G46880.3"/>
    <property type="gene ID" value="AT5G46880"/>
</dbReference>
<dbReference type="GeneID" id="834733"/>
<dbReference type="Gramene" id="AT5G46880.1">
    <property type="protein sequence ID" value="AT5G46880.1"/>
    <property type="gene ID" value="AT5G46880"/>
</dbReference>
<dbReference type="Gramene" id="AT5G46880.2">
    <property type="protein sequence ID" value="AT5G46880.2"/>
    <property type="gene ID" value="AT5G46880"/>
</dbReference>
<dbReference type="Gramene" id="AT5G46880.3">
    <property type="protein sequence ID" value="AT5G46880.3"/>
    <property type="gene ID" value="AT5G46880"/>
</dbReference>
<dbReference type="KEGG" id="ath:AT5G46880"/>
<dbReference type="Araport" id="AT5G46880"/>
<dbReference type="TAIR" id="AT5G46880">
    <property type="gene designation" value="HB-7"/>
</dbReference>
<dbReference type="eggNOG" id="ENOG502QU3P">
    <property type="taxonomic scope" value="Eukaryota"/>
</dbReference>
<dbReference type="HOGENOM" id="CLU_015002_2_1_1"/>
<dbReference type="InParanoid" id="Q9FJS2"/>
<dbReference type="OMA" id="QAPVMGC"/>
<dbReference type="PhylomeDB" id="Q9FJS2"/>
<dbReference type="PRO" id="PR:Q9FJS2"/>
<dbReference type="Proteomes" id="UP000006548">
    <property type="component" value="Chromosome 5"/>
</dbReference>
<dbReference type="ExpressionAtlas" id="Q9FJS2">
    <property type="expression patterns" value="baseline and differential"/>
</dbReference>
<dbReference type="GO" id="GO:0005634">
    <property type="term" value="C:nucleus"/>
    <property type="evidence" value="ECO:0007669"/>
    <property type="project" value="UniProtKB-SubCell"/>
</dbReference>
<dbReference type="GO" id="GO:0003677">
    <property type="term" value="F:DNA binding"/>
    <property type="evidence" value="ECO:0007669"/>
    <property type="project" value="UniProtKB-KW"/>
</dbReference>
<dbReference type="GO" id="GO:0003700">
    <property type="term" value="F:DNA-binding transcription factor activity"/>
    <property type="evidence" value="ECO:0000250"/>
    <property type="project" value="TAIR"/>
</dbReference>
<dbReference type="GO" id="GO:0000981">
    <property type="term" value="F:DNA-binding transcription factor activity, RNA polymerase II-specific"/>
    <property type="evidence" value="ECO:0007669"/>
    <property type="project" value="InterPro"/>
</dbReference>
<dbReference type="GO" id="GO:0008289">
    <property type="term" value="F:lipid binding"/>
    <property type="evidence" value="ECO:0007669"/>
    <property type="project" value="InterPro"/>
</dbReference>
<dbReference type="GO" id="GO:0048497">
    <property type="term" value="P:maintenance of floral organ identity"/>
    <property type="evidence" value="ECO:0000315"/>
    <property type="project" value="UniProtKB"/>
</dbReference>
<dbReference type="CDD" id="cd00086">
    <property type="entry name" value="homeodomain"/>
    <property type="match status" value="1"/>
</dbReference>
<dbReference type="CDD" id="cd08875">
    <property type="entry name" value="START_ArGLABRA2_like"/>
    <property type="match status" value="1"/>
</dbReference>
<dbReference type="FunFam" id="1.10.10.60:FF:000229">
    <property type="entry name" value="Homeobox-leucine zipper protein HDG1"/>
    <property type="match status" value="1"/>
</dbReference>
<dbReference type="Gene3D" id="1.10.10.60">
    <property type="entry name" value="Homeodomain-like"/>
    <property type="match status" value="1"/>
</dbReference>
<dbReference type="InterPro" id="IPR042160">
    <property type="entry name" value="GLABRA2/ANL2/PDF2/ATML1-like"/>
</dbReference>
<dbReference type="InterPro" id="IPR001356">
    <property type="entry name" value="HD"/>
</dbReference>
<dbReference type="InterPro" id="IPR017970">
    <property type="entry name" value="Homeobox_CS"/>
</dbReference>
<dbReference type="InterPro" id="IPR009057">
    <property type="entry name" value="Homeodomain-like_sf"/>
</dbReference>
<dbReference type="InterPro" id="IPR002913">
    <property type="entry name" value="START_lipid-bd_dom"/>
</dbReference>
<dbReference type="PANTHER" id="PTHR45654:SF11">
    <property type="entry name" value="HOMEOBOX-LEUCINE ZIPPER PROTEIN HDG5"/>
    <property type="match status" value="1"/>
</dbReference>
<dbReference type="PANTHER" id="PTHR45654">
    <property type="entry name" value="HOMEOBOX-LEUCINE ZIPPER PROTEIN MERISTEM L1"/>
    <property type="match status" value="1"/>
</dbReference>
<dbReference type="Pfam" id="PF00046">
    <property type="entry name" value="Homeodomain"/>
    <property type="match status" value="1"/>
</dbReference>
<dbReference type="Pfam" id="PF01852">
    <property type="entry name" value="START"/>
    <property type="match status" value="1"/>
</dbReference>
<dbReference type="SMART" id="SM00389">
    <property type="entry name" value="HOX"/>
    <property type="match status" value="1"/>
</dbReference>
<dbReference type="SMART" id="SM00234">
    <property type="entry name" value="START"/>
    <property type="match status" value="1"/>
</dbReference>
<dbReference type="SUPFAM" id="SSF55961">
    <property type="entry name" value="Bet v1-like"/>
    <property type="match status" value="2"/>
</dbReference>
<dbReference type="SUPFAM" id="SSF46689">
    <property type="entry name" value="Homeodomain-like"/>
    <property type="match status" value="1"/>
</dbReference>
<dbReference type="PROSITE" id="PS00027">
    <property type="entry name" value="HOMEOBOX_1"/>
    <property type="match status" value="1"/>
</dbReference>
<dbReference type="PROSITE" id="PS50071">
    <property type="entry name" value="HOMEOBOX_2"/>
    <property type="match status" value="1"/>
</dbReference>
<dbReference type="PROSITE" id="PS50848">
    <property type="entry name" value="START"/>
    <property type="match status" value="1"/>
</dbReference>
<protein>
    <recommendedName>
        <fullName evidence="9">Homeobox-leucine zipper protein HDG5</fullName>
    </recommendedName>
    <alternativeName>
        <fullName evidence="9">HD-ZIP protein HDG5</fullName>
    </alternativeName>
    <alternativeName>
        <fullName evidence="8">Homeodomain GLABRA 2-like protein 5</fullName>
    </alternativeName>
    <alternativeName>
        <fullName evidence="9">Homeodomain transcription factor HDG5</fullName>
    </alternativeName>
    <alternativeName>
        <fullName evidence="9">Protein HOMEODOMAIN GLABROUS 5</fullName>
    </alternativeName>
</protein>
<accession>Q9FJS2</accession>
<organism>
    <name type="scientific">Arabidopsis thaliana</name>
    <name type="common">Mouse-ear cress</name>
    <dbReference type="NCBI Taxonomy" id="3702"/>
    <lineage>
        <taxon>Eukaryota</taxon>
        <taxon>Viridiplantae</taxon>
        <taxon>Streptophyta</taxon>
        <taxon>Embryophyta</taxon>
        <taxon>Tracheophyta</taxon>
        <taxon>Spermatophyta</taxon>
        <taxon>Magnoliopsida</taxon>
        <taxon>eudicotyledons</taxon>
        <taxon>Gunneridae</taxon>
        <taxon>Pentapetalae</taxon>
        <taxon>rosids</taxon>
        <taxon>malvids</taxon>
        <taxon>Brassicales</taxon>
        <taxon>Brassicaceae</taxon>
        <taxon>Camelineae</taxon>
        <taxon>Arabidopsis</taxon>
    </lineage>
</organism>
<comment type="function">
    <text evidence="1 7">Probable transcription factor (By similarity). Involved, together with PDF2, in the regulation of flower organs development by promoting the expression of APETALA 3 (AP3) in the epidermis and internal cell layers of developing flowers (PubMed:23590515).</text>
</comment>
<comment type="subcellular location">
    <subcellularLocation>
        <location evidence="10">Nucleus</location>
    </subcellularLocation>
</comment>
<comment type="tissue specificity">
    <text evidence="6">Expressed in shoot apical meristem (SAM) with higher levels in L1 cells and the epidermal layer of young leaves. Expressed in the L1 of apical inflorescence meristems, early flower primordia, carpel and stamen filament epidermis, ovule primordia, nucellus and chalaze.</text>
</comment>
<comment type="disruption phenotype">
    <text evidence="7">The double mutant pdf2-1 hdg5-1 exhibits abnormal flowers with sepaloid petals and carpelloid stamens in association with a reduced expression of APETALA 3 (AP3) in the epidermis and internal cell layers of developing flowers.</text>
</comment>
<comment type="similarity">
    <text evidence="10">Belongs to the HD-ZIP homeobox family. Class IV subfamily.</text>
</comment>
<comment type="sequence caution" evidence="10">
    <conflict type="erroneous gene model prediction">
        <sequence resource="EMBL-CDS" id="BAB10227"/>
    </conflict>
</comment>
<comment type="sequence caution" evidence="10">
    <conflict type="miscellaneous discrepancy">
        <sequence resource="EMBL" id="BX841652"/>
    </conflict>
    <text>Sequencing errors.</text>
</comment>
<reference key="1">
    <citation type="journal article" date="1998" name="DNA Res.">
        <title>Structural analysis of Arabidopsis thaliana chromosome 5. VI. Sequence features of the regions of 1,367,185 bp covered by 19 physically assigned P1 and TAC clones.</title>
        <authorList>
            <person name="Kotani H."/>
            <person name="Nakamura Y."/>
            <person name="Sato S."/>
            <person name="Asamizu E."/>
            <person name="Kaneko T."/>
            <person name="Miyajima N."/>
            <person name="Tabata S."/>
        </authorList>
    </citation>
    <scope>NUCLEOTIDE SEQUENCE [LARGE SCALE GENOMIC DNA]</scope>
    <source>
        <strain>cv. Columbia</strain>
    </source>
</reference>
<reference key="2">
    <citation type="journal article" date="2017" name="Plant J.">
        <title>Araport11: a complete reannotation of the Arabidopsis thaliana reference genome.</title>
        <authorList>
            <person name="Cheng C.Y."/>
            <person name="Krishnakumar V."/>
            <person name="Chan A.P."/>
            <person name="Thibaud-Nissen F."/>
            <person name="Schobel S."/>
            <person name="Town C.D."/>
        </authorList>
    </citation>
    <scope>GENOME REANNOTATION</scope>
    <source>
        <strain>cv. Columbia</strain>
    </source>
</reference>
<reference key="3">
    <citation type="journal article" date="2004" name="Genome Res.">
        <title>Whole genome sequence comparisons and 'full-length' cDNA sequences: a combined approach to evaluate and improve Arabidopsis genome annotation.</title>
        <authorList>
            <person name="Castelli V."/>
            <person name="Aury J.-M."/>
            <person name="Jaillon O."/>
            <person name="Wincker P."/>
            <person name="Clepet C."/>
            <person name="Menard M."/>
            <person name="Cruaud C."/>
            <person name="Quetier F."/>
            <person name="Scarpelli C."/>
            <person name="Schaechter V."/>
            <person name="Temple G."/>
            <person name="Caboche M."/>
            <person name="Weissenbach J."/>
            <person name="Salanoubat M."/>
        </authorList>
    </citation>
    <scope>NUCLEOTIDE SEQUENCE [LARGE SCALE MRNA] OF 1-302</scope>
    <source>
        <strain>cv. Columbia</strain>
    </source>
</reference>
<reference key="4">
    <citation type="journal article" date="2000" name="Plant Mol. Biol.">
        <title>Organization and structural evolution of four multigene families in Arabidopsis thaliana: AtLCAD, AtLGT, AtMYST and AtHD-GL2.</title>
        <authorList>
            <person name="Tavares R."/>
            <person name="Aubourg S."/>
            <person name="Lecharny A."/>
            <person name="Kreis M."/>
        </authorList>
    </citation>
    <scope>GENE FAMILY</scope>
</reference>
<reference key="5">
    <citation type="journal article" date="2006" name="Plant Physiol.">
        <title>Characterization of the class IV homeodomain-leucine zipper gene family in Arabidopsis.</title>
        <authorList>
            <person name="Nakamura M."/>
            <person name="Katsumata H."/>
            <person name="Abe M."/>
            <person name="Yabe N."/>
            <person name="Komeda Y."/>
            <person name="Yamamoto K.T."/>
            <person name="Takahashi T."/>
        </authorList>
    </citation>
    <scope>TISSUE SPECIFICITY</scope>
    <scope>GENE FAMILY</scope>
    <scope>NOMENCLATURE</scope>
</reference>
<reference key="6">
    <citation type="journal article" date="2013" name="Plant J.">
        <title>Mutations in epidermis-specific HD-ZIP IV genes affect floral organ identity in Arabidopsis thaliana.</title>
        <authorList>
            <person name="Kamata N."/>
            <person name="Okada H."/>
            <person name="Komeda Y."/>
            <person name="Takahashi T."/>
        </authorList>
    </citation>
    <scope>FUNCTION</scope>
    <scope>DISRUPTION PHENOTYPE</scope>
    <source>
        <strain>cv. Columbia</strain>
    </source>
</reference>
<keyword id="KW-0175">Coiled coil</keyword>
<keyword id="KW-0238">DNA-binding</keyword>
<keyword id="KW-0371">Homeobox</keyword>
<keyword id="KW-0539">Nucleus</keyword>
<keyword id="KW-1185">Reference proteome</keyword>
<keyword id="KW-0804">Transcription</keyword>
<keyword id="KW-0805">Transcription regulation</keyword>
<gene>
    <name evidence="9" type="primary">HDG5</name>
    <name evidence="8" type="synonym">HDGL2-5</name>
    <name evidence="11" type="ordered locus">At5g46880</name>
    <name evidence="12" type="ORF">MQD22.1</name>
</gene>
<evidence type="ECO:0000250" key="1">
    <source>
        <dbReference type="UniProtKB" id="Q0WV12"/>
    </source>
</evidence>
<evidence type="ECO:0000255" key="2"/>
<evidence type="ECO:0000255" key="3">
    <source>
        <dbReference type="PROSITE-ProRule" id="PRU00108"/>
    </source>
</evidence>
<evidence type="ECO:0000255" key="4">
    <source>
        <dbReference type="PROSITE-ProRule" id="PRU00197"/>
    </source>
</evidence>
<evidence type="ECO:0000256" key="5">
    <source>
        <dbReference type="SAM" id="MobiDB-lite"/>
    </source>
</evidence>
<evidence type="ECO:0000269" key="6">
    <source>
    </source>
</evidence>
<evidence type="ECO:0000269" key="7">
    <source>
    </source>
</evidence>
<evidence type="ECO:0000303" key="8">
    <source>
    </source>
</evidence>
<evidence type="ECO:0000303" key="9">
    <source>
    </source>
</evidence>
<evidence type="ECO:0000305" key="10"/>
<evidence type="ECO:0000312" key="11">
    <source>
        <dbReference type="Araport" id="AT5G46880"/>
    </source>
</evidence>
<evidence type="ECO:0000312" key="12">
    <source>
        <dbReference type="EMBL" id="BAB10227.1"/>
    </source>
</evidence>